<evidence type="ECO:0000250" key="1"/>
<evidence type="ECO:0000250" key="2">
    <source>
        <dbReference type="UniProtKB" id="Q8BYW9"/>
    </source>
</evidence>
<evidence type="ECO:0000255" key="3"/>
<evidence type="ECO:0000255" key="4">
    <source>
        <dbReference type="PROSITE-ProRule" id="PRU10138"/>
    </source>
</evidence>
<evidence type="ECO:0000305" key="5"/>
<gene>
    <name type="primary">EOGT</name>
    <name type="synonym">AER61</name>
</gene>
<feature type="signal peptide" evidence="3">
    <location>
        <begin position="1"/>
        <end position="17"/>
    </location>
</feature>
<feature type="chain" id="PRO_0000301969" description="EGF domain-specific O-linked N-acetylglucosamine transferase">
    <location>
        <begin position="18"/>
        <end position="527"/>
    </location>
</feature>
<feature type="short sequence motif" description="Required for optimal activity" evidence="1">
    <location>
        <begin position="295"/>
        <end position="297"/>
    </location>
</feature>
<feature type="short sequence motif" description="Prevents secretion from ER" evidence="4">
    <location>
        <begin position="524"/>
        <end position="527"/>
    </location>
</feature>
<feature type="glycosylation site" description="N-linked (GlcNAc...) asparagine" evidence="3">
    <location>
        <position position="354"/>
    </location>
</feature>
<organism>
    <name type="scientific">Bos taurus</name>
    <name type="common">Bovine</name>
    <dbReference type="NCBI Taxonomy" id="9913"/>
    <lineage>
        <taxon>Eukaryota</taxon>
        <taxon>Metazoa</taxon>
        <taxon>Chordata</taxon>
        <taxon>Craniata</taxon>
        <taxon>Vertebrata</taxon>
        <taxon>Euteleostomi</taxon>
        <taxon>Mammalia</taxon>
        <taxon>Eutheria</taxon>
        <taxon>Laurasiatheria</taxon>
        <taxon>Artiodactyla</taxon>
        <taxon>Ruminantia</taxon>
        <taxon>Pecora</taxon>
        <taxon>Bovidae</taxon>
        <taxon>Bovinae</taxon>
        <taxon>Bos</taxon>
    </lineage>
</organism>
<comment type="function">
    <text evidence="2">Catalyzes the transfer of a single N-acetylglucosamine from UDP-GlcNAc to a serine or threonine residue in extracellular proteins resulting in their modification with a beta-linked N-acetylglucosamine (O-GlcNAc). Specifically glycosylates the Thr residue located between the fifth and sixth conserved cysteines of folded EGF-like domains.</text>
</comment>
<comment type="catalytic activity">
    <reaction evidence="2">
        <text>L-seryl-[protein] + UDP-N-acetyl-alpha-D-glucosamine = 3-O-(N-acetyl-beta-D-glucosaminyl)-L-seryl-[protein] + UDP + H(+)</text>
        <dbReference type="Rhea" id="RHEA:48904"/>
        <dbReference type="Rhea" id="RHEA-COMP:9863"/>
        <dbReference type="Rhea" id="RHEA-COMP:12251"/>
        <dbReference type="ChEBI" id="CHEBI:15378"/>
        <dbReference type="ChEBI" id="CHEBI:29999"/>
        <dbReference type="ChEBI" id="CHEBI:57705"/>
        <dbReference type="ChEBI" id="CHEBI:58223"/>
        <dbReference type="ChEBI" id="CHEBI:90838"/>
        <dbReference type="EC" id="2.4.1.255"/>
    </reaction>
</comment>
<comment type="catalytic activity">
    <reaction evidence="2">
        <text>L-threonyl-[protein] + UDP-N-acetyl-alpha-D-glucosamine = 3-O-(N-acetyl-beta-D-glucosaminyl)-L-threonyl-[protein] + UDP + H(+)</text>
        <dbReference type="Rhea" id="RHEA:48908"/>
        <dbReference type="Rhea" id="RHEA-COMP:11060"/>
        <dbReference type="Rhea" id="RHEA-COMP:12252"/>
        <dbReference type="ChEBI" id="CHEBI:15378"/>
        <dbReference type="ChEBI" id="CHEBI:30013"/>
        <dbReference type="ChEBI" id="CHEBI:57705"/>
        <dbReference type="ChEBI" id="CHEBI:58223"/>
        <dbReference type="ChEBI" id="CHEBI:90840"/>
        <dbReference type="EC" id="2.4.1.255"/>
    </reaction>
</comment>
<comment type="subcellular location">
    <subcellularLocation>
        <location evidence="4">Endoplasmic reticulum lumen</location>
    </subcellularLocation>
</comment>
<comment type="similarity">
    <text evidence="5">Belongs to the glycosyltransferase 61 family.</text>
</comment>
<dbReference type="EC" id="2.4.1.255" evidence="2"/>
<dbReference type="EMBL" id="BC126625">
    <property type="protein sequence ID" value="AAI26626.1"/>
    <property type="molecule type" value="mRNA"/>
</dbReference>
<dbReference type="RefSeq" id="NP_001071350.1">
    <property type="nucleotide sequence ID" value="NM_001077882.1"/>
</dbReference>
<dbReference type="RefSeq" id="XP_005222695.1">
    <property type="nucleotide sequence ID" value="XM_005222638.5"/>
</dbReference>
<dbReference type="RefSeq" id="XP_005222696.1">
    <property type="nucleotide sequence ID" value="XM_005222639.5"/>
</dbReference>
<dbReference type="RefSeq" id="XP_005222697.1">
    <property type="nucleotide sequence ID" value="XM_005222640.3"/>
</dbReference>
<dbReference type="RefSeq" id="XP_005222698.1">
    <property type="nucleotide sequence ID" value="XM_005222641.5"/>
</dbReference>
<dbReference type="RefSeq" id="XP_059735557.1">
    <property type="nucleotide sequence ID" value="XM_059879574.1"/>
</dbReference>
<dbReference type="SMR" id="A0JND3"/>
<dbReference type="FunCoup" id="A0JND3">
    <property type="interactions" value="1263"/>
</dbReference>
<dbReference type="STRING" id="9913.ENSBTAP00000030725"/>
<dbReference type="CAZy" id="GT61">
    <property type="family name" value="Glycosyltransferase Family 61"/>
</dbReference>
<dbReference type="GlyCosmos" id="A0JND3">
    <property type="glycosylation" value="1 site, No reported glycans"/>
</dbReference>
<dbReference type="GlyGen" id="A0JND3">
    <property type="glycosylation" value="1 site"/>
</dbReference>
<dbReference type="PaxDb" id="9913-ENSBTAP00000030725"/>
<dbReference type="Ensembl" id="ENSBTAT00000030754.5">
    <property type="protein sequence ID" value="ENSBTAP00000030725.4"/>
    <property type="gene ID" value="ENSBTAG00000022681.6"/>
</dbReference>
<dbReference type="GeneID" id="508782"/>
<dbReference type="KEGG" id="bta:508782"/>
<dbReference type="CTD" id="285203"/>
<dbReference type="VEuPathDB" id="HostDB:ENSBTAG00000022681"/>
<dbReference type="VGNC" id="VGNC:28515">
    <property type="gene designation" value="EOGT"/>
</dbReference>
<dbReference type="eggNOG" id="KOG4698">
    <property type="taxonomic scope" value="Eukaryota"/>
</dbReference>
<dbReference type="GeneTree" id="ENSGT00940000156493"/>
<dbReference type="HOGENOM" id="CLU_039300_0_0_1"/>
<dbReference type="InParanoid" id="A0JND3"/>
<dbReference type="OMA" id="GHCELNR"/>
<dbReference type="OrthoDB" id="529273at2759"/>
<dbReference type="TreeFam" id="TF313716"/>
<dbReference type="Proteomes" id="UP000009136">
    <property type="component" value="Chromosome 22"/>
</dbReference>
<dbReference type="Bgee" id="ENSBTAG00000022681">
    <property type="expression patterns" value="Expressed in neutrophil and 104 other cell types or tissues"/>
</dbReference>
<dbReference type="GO" id="GO:0005788">
    <property type="term" value="C:endoplasmic reticulum lumen"/>
    <property type="evidence" value="ECO:0000318"/>
    <property type="project" value="GO_Central"/>
</dbReference>
<dbReference type="GO" id="GO:0097363">
    <property type="term" value="F:protein O-acetylglucosaminyltransferase activity"/>
    <property type="evidence" value="ECO:0000250"/>
    <property type="project" value="UniProtKB"/>
</dbReference>
<dbReference type="GO" id="GO:0097370">
    <property type="term" value="P:protein O-GlcNAcylation via threonine"/>
    <property type="evidence" value="ECO:0000318"/>
    <property type="project" value="GO_Central"/>
</dbReference>
<dbReference type="GO" id="GO:0006493">
    <property type="term" value="P:protein O-linked glycosylation"/>
    <property type="evidence" value="ECO:0000250"/>
    <property type="project" value="UniProtKB"/>
</dbReference>
<dbReference type="InterPro" id="IPR049625">
    <property type="entry name" value="Glyco_transf_61_cat"/>
</dbReference>
<dbReference type="InterPro" id="IPR007657">
    <property type="entry name" value="Glycosyltransferase_61"/>
</dbReference>
<dbReference type="PANTHER" id="PTHR20961:SF148">
    <property type="entry name" value="EGF DOMAIN-SPECIFIC O-LINKED N-ACETYLGLUCOSAMINE TRANSFERASE"/>
    <property type="match status" value="1"/>
</dbReference>
<dbReference type="PANTHER" id="PTHR20961">
    <property type="entry name" value="GLYCOSYLTRANSFERASE"/>
    <property type="match status" value="1"/>
</dbReference>
<dbReference type="Pfam" id="PF04577">
    <property type="entry name" value="Glyco_transf_61"/>
    <property type="match status" value="1"/>
</dbReference>
<dbReference type="PROSITE" id="PS00014">
    <property type="entry name" value="ER_TARGET"/>
    <property type="match status" value="1"/>
</dbReference>
<protein>
    <recommendedName>
        <fullName>EGF domain-specific O-linked N-acetylglucosamine transferase</fullName>
        <ecNumber evidence="2">2.4.1.255</ecNumber>
    </recommendedName>
    <alternativeName>
        <fullName>Extracellular O-linked N-acetylglucosamine transferase</fullName>
    </alternativeName>
</protein>
<accession>A0JND3</accession>
<keyword id="KW-0256">Endoplasmic reticulum</keyword>
<keyword id="KW-0325">Glycoprotein</keyword>
<keyword id="KW-0328">Glycosyltransferase</keyword>
<keyword id="KW-1185">Reference proteome</keyword>
<keyword id="KW-0732">Signal</keyword>
<keyword id="KW-0808">Transferase</keyword>
<reference key="1">
    <citation type="submission" date="2006-10" db="EMBL/GenBank/DDBJ databases">
        <authorList>
            <consortium name="NIH - Mammalian Gene Collection (MGC) project"/>
        </authorList>
    </citation>
    <scope>NUCLEOTIDE SEQUENCE [LARGE SCALE MRNA]</scope>
    <source>
        <strain>Hereford</strain>
        <tissue>Fetal skin</tissue>
    </source>
</reference>
<sequence>MFMLLVFGALLPEVPLSGQDKAPPQADGISATPLFNYASLRLPEEHIPFFLHNNRHIATVCRKDSHCPYKKYLENLKYCWGYEKSCRPEFRFGYPVCTYVDMGWTDTLESAQEIFWKQADFGYAAERLEELHVLCQPKEKNDSSLVCSRYLQYCRATNIYLDLRNIKRNHDRFKEDFVQSGEIGGYCKLDIRSLMSQGQRKSPLQSWFAELQSYTELNFRPVEDAQCDIVIEKPTYFMKLDAGVNMYHHFCDFINLYITQHVNNSFSTDVYVVMWDTSSYGYGDLFSDTWKAFTDYDVIHLKTYDAKRVCFKEAIFSLLPRMRYGLFYNTPLISGCQNTGLFRAFSQHVLHRLNITQEGPKGGKIRVTILARSTEYRKILNQNELVNALKTVSTFEVQIVDYKYKELGFLDQLRITHNTDIFIGMHGAGLTHLLFLPDWAAVFELYNCGDERCYLDLARLRGVHYITWRRQNKVFPQDKGHHPTLGEHPKFTNYSFDVEEFMYLVLQAADYVLQHPKWPFKKKHDEL</sequence>
<proteinExistence type="evidence at transcript level"/>
<name>EOGT_BOVIN</name>